<gene>
    <name evidence="1" type="primary">mntP</name>
    <name type="ordered locus">Smal_3977</name>
</gene>
<keyword id="KW-0997">Cell inner membrane</keyword>
<keyword id="KW-1003">Cell membrane</keyword>
<keyword id="KW-0406">Ion transport</keyword>
<keyword id="KW-0464">Manganese</keyword>
<keyword id="KW-0472">Membrane</keyword>
<keyword id="KW-0812">Transmembrane</keyword>
<keyword id="KW-1133">Transmembrane helix</keyword>
<keyword id="KW-0813">Transport</keyword>
<accession>B4SNQ6</accession>
<reference key="1">
    <citation type="submission" date="2008-06" db="EMBL/GenBank/DDBJ databases">
        <title>Complete sequence of Stenotrophomonas maltophilia R551-3.</title>
        <authorList>
            <consortium name="US DOE Joint Genome Institute"/>
            <person name="Lucas S."/>
            <person name="Copeland A."/>
            <person name="Lapidus A."/>
            <person name="Glavina del Rio T."/>
            <person name="Dalin E."/>
            <person name="Tice H."/>
            <person name="Pitluck S."/>
            <person name="Chain P."/>
            <person name="Malfatti S."/>
            <person name="Shin M."/>
            <person name="Vergez L."/>
            <person name="Lang D."/>
            <person name="Schmutz J."/>
            <person name="Larimer F."/>
            <person name="Land M."/>
            <person name="Hauser L."/>
            <person name="Kyrpides N."/>
            <person name="Mikhailova N."/>
            <person name="Taghavi S."/>
            <person name="Monchy S."/>
            <person name="Newman L."/>
            <person name="Vangronsveld J."/>
            <person name="van der Lelie D."/>
            <person name="Richardson P."/>
        </authorList>
    </citation>
    <scope>NUCLEOTIDE SEQUENCE [LARGE SCALE GENOMIC DNA]</scope>
    <source>
        <strain>R551-3</strain>
    </source>
</reference>
<name>MNTP_STRM5</name>
<dbReference type="EMBL" id="CP001111">
    <property type="protein sequence ID" value="ACF53676.1"/>
    <property type="molecule type" value="Genomic_DNA"/>
</dbReference>
<dbReference type="RefSeq" id="WP_012512512.1">
    <property type="nucleotide sequence ID" value="NC_011071.1"/>
</dbReference>
<dbReference type="STRING" id="391008.Smal_3977"/>
<dbReference type="KEGG" id="smt:Smal_3977"/>
<dbReference type="eggNOG" id="COG1971">
    <property type="taxonomic scope" value="Bacteria"/>
</dbReference>
<dbReference type="HOGENOM" id="CLU_096410_0_0_6"/>
<dbReference type="OrthoDB" id="9811590at2"/>
<dbReference type="Proteomes" id="UP000001867">
    <property type="component" value="Chromosome"/>
</dbReference>
<dbReference type="GO" id="GO:0005886">
    <property type="term" value="C:plasma membrane"/>
    <property type="evidence" value="ECO:0007669"/>
    <property type="project" value="UniProtKB-SubCell"/>
</dbReference>
<dbReference type="GO" id="GO:0005384">
    <property type="term" value="F:manganese ion transmembrane transporter activity"/>
    <property type="evidence" value="ECO:0007669"/>
    <property type="project" value="UniProtKB-UniRule"/>
</dbReference>
<dbReference type="HAMAP" id="MF_01521">
    <property type="entry name" value="MntP_pump"/>
    <property type="match status" value="1"/>
</dbReference>
<dbReference type="InterPro" id="IPR003810">
    <property type="entry name" value="Mntp/YtaF"/>
</dbReference>
<dbReference type="InterPro" id="IPR022929">
    <property type="entry name" value="Put_MntP"/>
</dbReference>
<dbReference type="PANTHER" id="PTHR35529">
    <property type="entry name" value="MANGANESE EFFLUX PUMP MNTP-RELATED"/>
    <property type="match status" value="1"/>
</dbReference>
<dbReference type="PANTHER" id="PTHR35529:SF1">
    <property type="entry name" value="MANGANESE EFFLUX PUMP MNTP-RELATED"/>
    <property type="match status" value="1"/>
</dbReference>
<dbReference type="Pfam" id="PF02659">
    <property type="entry name" value="Mntp"/>
    <property type="match status" value="1"/>
</dbReference>
<sequence length="191" mass="20140">MSPISILLIGFAMSTDAFAAAIGKGAAMRKPVFRDALRAGIIFGVIEAITPIIGWLLGRAALQYVEAFDHWIAFGLLGALGIHMIYNGLRPDSAEEDEDPSQHHGFWKLALTGFATSIDAMAVGIGLAFMDVHIGVMAVVIGLCTLTMVTVGIMLGRVLGSMVGKRAEIIGGVILVIIGATILYEHLHGVA</sequence>
<organism>
    <name type="scientific">Stenotrophomonas maltophilia (strain R551-3)</name>
    <dbReference type="NCBI Taxonomy" id="391008"/>
    <lineage>
        <taxon>Bacteria</taxon>
        <taxon>Pseudomonadati</taxon>
        <taxon>Pseudomonadota</taxon>
        <taxon>Gammaproteobacteria</taxon>
        <taxon>Lysobacterales</taxon>
        <taxon>Lysobacteraceae</taxon>
        <taxon>Stenotrophomonas</taxon>
        <taxon>Stenotrophomonas maltophilia group</taxon>
    </lineage>
</organism>
<comment type="function">
    <text evidence="1">Probably functions as a manganese efflux pump.</text>
</comment>
<comment type="subcellular location">
    <subcellularLocation>
        <location evidence="1">Cell inner membrane</location>
        <topology evidence="1">Multi-pass membrane protein</topology>
    </subcellularLocation>
</comment>
<comment type="similarity">
    <text evidence="1">Belongs to the MntP (TC 9.B.29) family.</text>
</comment>
<protein>
    <recommendedName>
        <fullName evidence="1">Putative manganese efflux pump MntP</fullName>
    </recommendedName>
</protein>
<feature type="chain" id="PRO_1000200044" description="Putative manganese efflux pump MntP">
    <location>
        <begin position="1"/>
        <end position="191"/>
    </location>
</feature>
<feature type="transmembrane region" description="Helical" evidence="1">
    <location>
        <begin position="3"/>
        <end position="23"/>
    </location>
</feature>
<feature type="transmembrane region" description="Helical" evidence="1">
    <location>
        <begin position="37"/>
        <end position="57"/>
    </location>
</feature>
<feature type="transmembrane region" description="Helical" evidence="1">
    <location>
        <begin position="65"/>
        <end position="85"/>
    </location>
</feature>
<feature type="transmembrane region" description="Helical" evidence="1">
    <location>
        <begin position="107"/>
        <end position="129"/>
    </location>
</feature>
<feature type="transmembrane region" description="Helical" evidence="1">
    <location>
        <begin position="144"/>
        <end position="164"/>
    </location>
</feature>
<feature type="transmembrane region" description="Helical" evidence="1">
    <location>
        <begin position="169"/>
        <end position="189"/>
    </location>
</feature>
<proteinExistence type="inferred from homology"/>
<evidence type="ECO:0000255" key="1">
    <source>
        <dbReference type="HAMAP-Rule" id="MF_01521"/>
    </source>
</evidence>